<sequence>MVNPTVFFDIAVDGEPLGRVSFELFADKVPKTAENFRALSTGEKGFGYKGSCFHRIIPGFMCQGGDFTRHNGTGGKSIYGEKFEDENFILKHTGPGILSMANAGPNTNGSQFFICTAKTEWLDGKHVVFGKVKEGMNIVEAMERFGSRNGKTSKKITIADCGQLE</sequence>
<keyword id="KW-0007">Acetylation</keyword>
<keyword id="KW-0053">Apoptosis</keyword>
<keyword id="KW-0963">Cytoplasm</keyword>
<keyword id="KW-0325">Glycoprotein</keyword>
<keyword id="KW-0413">Isomerase</keyword>
<keyword id="KW-1017">Isopeptide bond</keyword>
<keyword id="KW-0539">Nucleus</keyword>
<keyword id="KW-0597">Phosphoprotein</keyword>
<keyword id="KW-1185">Reference proteome</keyword>
<keyword id="KW-0697">Rotamase</keyword>
<keyword id="KW-0964">Secreted</keyword>
<keyword id="KW-0832">Ubl conjugation</keyword>
<dbReference type="EC" id="5.2.1.8" evidence="2"/>
<dbReference type="EMBL" id="DQ251277">
    <property type="protein sequence ID" value="ABB77877.1"/>
    <property type="molecule type" value="Genomic_DNA"/>
</dbReference>
<dbReference type="RefSeq" id="XP_004062662.2">
    <property type="nucleotide sequence ID" value="XM_004062614.2"/>
</dbReference>
<dbReference type="RefSeq" id="XP_018886247.3">
    <property type="nucleotide sequence ID" value="XM_019030702.4"/>
</dbReference>
<dbReference type="SMR" id="Q0ZQL0"/>
<dbReference type="FunCoup" id="Q0ZQL0">
    <property type="interactions" value="1509"/>
</dbReference>
<dbReference type="STRING" id="9593.ENSGGOP00000019965"/>
<dbReference type="GlyCosmos" id="Q0ZQL0">
    <property type="glycosylation" value="1 site, No reported glycans"/>
</dbReference>
<dbReference type="Ensembl" id="ENSGGOT00000029232.2">
    <property type="protein sequence ID" value="ENSGGOP00000019965.1"/>
    <property type="gene ID" value="ENSGGOG00000026298.2"/>
</dbReference>
<dbReference type="GeneID" id="101150115"/>
<dbReference type="KEGG" id="ggo:101150115"/>
<dbReference type="KEGG" id="ggo:101152412"/>
<dbReference type="CTD" id="5478"/>
<dbReference type="eggNOG" id="KOG0865">
    <property type="taxonomic scope" value="Eukaryota"/>
</dbReference>
<dbReference type="GeneTree" id="ENSGT00950000183087"/>
<dbReference type="HOGENOM" id="CLU_012062_4_3_1"/>
<dbReference type="InParanoid" id="Q0ZQL0"/>
<dbReference type="OMA" id="CVSIYGH"/>
<dbReference type="Proteomes" id="UP000001519">
    <property type="component" value="Chromosome 7"/>
</dbReference>
<dbReference type="Bgee" id="ENSGGOG00000026298">
    <property type="expression patterns" value="Expressed in cerebellum and 6 other cell types or tissues"/>
</dbReference>
<dbReference type="GO" id="GO:0005737">
    <property type="term" value="C:cytoplasm"/>
    <property type="evidence" value="ECO:0000250"/>
    <property type="project" value="UniProtKB"/>
</dbReference>
<dbReference type="GO" id="GO:0005829">
    <property type="term" value="C:cytosol"/>
    <property type="evidence" value="ECO:0000250"/>
    <property type="project" value="UniProtKB"/>
</dbReference>
<dbReference type="GO" id="GO:0005576">
    <property type="term" value="C:extracellular region"/>
    <property type="evidence" value="ECO:0000250"/>
    <property type="project" value="UniProtKB"/>
</dbReference>
<dbReference type="GO" id="GO:0005634">
    <property type="term" value="C:nucleus"/>
    <property type="evidence" value="ECO:0000250"/>
    <property type="project" value="UniProtKB"/>
</dbReference>
<dbReference type="GO" id="GO:0032991">
    <property type="term" value="C:protein-containing complex"/>
    <property type="evidence" value="ECO:0007669"/>
    <property type="project" value="Ensembl"/>
</dbReference>
<dbReference type="GO" id="GO:0016018">
    <property type="term" value="F:cyclosporin A binding"/>
    <property type="evidence" value="ECO:0000318"/>
    <property type="project" value="GO_Central"/>
</dbReference>
<dbReference type="GO" id="GO:1904399">
    <property type="term" value="F:heparan sulfate binding"/>
    <property type="evidence" value="ECO:0000250"/>
    <property type="project" value="UniProtKB"/>
</dbReference>
<dbReference type="GO" id="GO:0005178">
    <property type="term" value="F:integrin binding"/>
    <property type="evidence" value="ECO:0000250"/>
    <property type="project" value="UniProtKB"/>
</dbReference>
<dbReference type="GO" id="GO:0003755">
    <property type="term" value="F:peptidyl-prolyl cis-trans isomerase activity"/>
    <property type="evidence" value="ECO:0000250"/>
    <property type="project" value="UniProtKB"/>
</dbReference>
<dbReference type="GO" id="GO:0032148">
    <property type="term" value="P:activation of protein kinase B activity"/>
    <property type="evidence" value="ECO:0000250"/>
    <property type="project" value="UniProtKB"/>
</dbReference>
<dbReference type="GO" id="GO:0006915">
    <property type="term" value="P:apoptotic process"/>
    <property type="evidence" value="ECO:0000250"/>
    <property type="project" value="UniProtKB"/>
</dbReference>
<dbReference type="GO" id="GO:0060352">
    <property type="term" value="P:cell adhesion molecule production"/>
    <property type="evidence" value="ECO:0000250"/>
    <property type="project" value="UniProtKB"/>
</dbReference>
<dbReference type="GO" id="GO:0034599">
    <property type="term" value="P:cellular response to oxidative stress"/>
    <property type="evidence" value="ECO:0000250"/>
    <property type="project" value="UniProtKB"/>
</dbReference>
<dbReference type="GO" id="GO:0042118">
    <property type="term" value="P:endothelial cell activation"/>
    <property type="evidence" value="ECO:0000250"/>
    <property type="project" value="UniProtKB"/>
</dbReference>
<dbReference type="GO" id="GO:0030595">
    <property type="term" value="P:leukocyte chemotaxis"/>
    <property type="evidence" value="ECO:0000250"/>
    <property type="project" value="UniProtKB"/>
</dbReference>
<dbReference type="GO" id="GO:0034389">
    <property type="term" value="P:lipid droplet organization"/>
    <property type="evidence" value="ECO:0007669"/>
    <property type="project" value="Ensembl"/>
</dbReference>
<dbReference type="GO" id="GO:1902176">
    <property type="term" value="P:negative regulation of oxidative stress-induced intrinsic apoptotic signaling pathway"/>
    <property type="evidence" value="ECO:0000250"/>
    <property type="project" value="UniProtKB"/>
</dbReference>
<dbReference type="GO" id="GO:0061944">
    <property type="term" value="P:negative regulation of protein K48-linked ubiquitination"/>
    <property type="evidence" value="ECO:0000250"/>
    <property type="project" value="UniProtKB"/>
</dbReference>
<dbReference type="GO" id="GO:0006469">
    <property type="term" value="P:negative regulation of protein kinase activity"/>
    <property type="evidence" value="ECO:0000250"/>
    <property type="project" value="UniProtKB"/>
</dbReference>
<dbReference type="GO" id="GO:0001933">
    <property type="term" value="P:negative regulation of protein phosphorylation"/>
    <property type="evidence" value="ECO:0000250"/>
    <property type="project" value="UniProtKB"/>
</dbReference>
<dbReference type="GO" id="GO:0032873">
    <property type="term" value="P:negative regulation of stress-activated MAPK cascade"/>
    <property type="evidence" value="ECO:0000250"/>
    <property type="project" value="UniProtKB"/>
</dbReference>
<dbReference type="GO" id="GO:1903901">
    <property type="term" value="P:negative regulation of viral life cycle"/>
    <property type="evidence" value="ECO:0007669"/>
    <property type="project" value="Ensembl"/>
</dbReference>
<dbReference type="GO" id="GO:0030593">
    <property type="term" value="P:neutrophil chemotaxis"/>
    <property type="evidence" value="ECO:0000250"/>
    <property type="project" value="UniProtKB"/>
</dbReference>
<dbReference type="GO" id="GO:0030168">
    <property type="term" value="P:platelet activation"/>
    <property type="evidence" value="ECO:0000250"/>
    <property type="project" value="UniProtKB"/>
</dbReference>
<dbReference type="GO" id="GO:0070527">
    <property type="term" value="P:platelet aggregation"/>
    <property type="evidence" value="ECO:0000250"/>
    <property type="project" value="UniProtKB"/>
</dbReference>
<dbReference type="GO" id="GO:0043410">
    <property type="term" value="P:positive regulation of MAPK cascade"/>
    <property type="evidence" value="ECO:0000250"/>
    <property type="project" value="UniProtKB"/>
</dbReference>
<dbReference type="GO" id="GO:0051092">
    <property type="term" value="P:positive regulation of NF-kappaB transcription factor activity"/>
    <property type="evidence" value="ECO:0000250"/>
    <property type="project" value="UniProtKB"/>
</dbReference>
<dbReference type="GO" id="GO:0001934">
    <property type="term" value="P:positive regulation of protein phosphorylation"/>
    <property type="evidence" value="ECO:0000250"/>
    <property type="project" value="UniProtKB"/>
</dbReference>
<dbReference type="GO" id="GO:0050714">
    <property type="term" value="P:positive regulation of protein secretion"/>
    <property type="evidence" value="ECO:0007669"/>
    <property type="project" value="Ensembl"/>
</dbReference>
<dbReference type="GO" id="GO:0045070">
    <property type="term" value="P:positive regulation of viral genome replication"/>
    <property type="evidence" value="ECO:0007669"/>
    <property type="project" value="Ensembl"/>
</dbReference>
<dbReference type="GO" id="GO:0006457">
    <property type="term" value="P:protein folding"/>
    <property type="evidence" value="ECO:0000318"/>
    <property type="project" value="GO_Central"/>
</dbReference>
<dbReference type="GO" id="GO:0000413">
    <property type="term" value="P:protein peptidyl-prolyl isomerization"/>
    <property type="evidence" value="ECO:0000250"/>
    <property type="project" value="UniProtKB"/>
</dbReference>
<dbReference type="GO" id="GO:2001233">
    <property type="term" value="P:regulation of apoptotic signaling pathway"/>
    <property type="evidence" value="ECO:0000250"/>
    <property type="project" value="UniProtKB"/>
</dbReference>
<dbReference type="GO" id="GO:0045069">
    <property type="term" value="P:regulation of viral genome replication"/>
    <property type="evidence" value="ECO:0000250"/>
    <property type="project" value="UniProtKB"/>
</dbReference>
<dbReference type="CDD" id="cd01926">
    <property type="entry name" value="cyclophilin_ABH_like"/>
    <property type="match status" value="1"/>
</dbReference>
<dbReference type="FunFam" id="2.40.100.10:FF:000011">
    <property type="entry name" value="Peptidyl-prolyl cis-trans isomerase A"/>
    <property type="match status" value="1"/>
</dbReference>
<dbReference type="Gene3D" id="2.40.100.10">
    <property type="entry name" value="Cyclophilin-like"/>
    <property type="match status" value="1"/>
</dbReference>
<dbReference type="InterPro" id="IPR029000">
    <property type="entry name" value="Cyclophilin-like_dom_sf"/>
</dbReference>
<dbReference type="InterPro" id="IPR024936">
    <property type="entry name" value="Cyclophilin-type_PPIase"/>
</dbReference>
<dbReference type="InterPro" id="IPR020892">
    <property type="entry name" value="Cyclophilin-type_PPIase_CS"/>
</dbReference>
<dbReference type="InterPro" id="IPR002130">
    <property type="entry name" value="Cyclophilin-type_PPIase_dom"/>
</dbReference>
<dbReference type="PANTHER" id="PTHR11071">
    <property type="entry name" value="PEPTIDYL-PROLYL CIS-TRANS ISOMERASE"/>
    <property type="match status" value="1"/>
</dbReference>
<dbReference type="PANTHER" id="PTHR11071:SF490">
    <property type="entry name" value="PEPTIDYL-PROLYL CIS-TRANS ISOMERASE A"/>
    <property type="match status" value="1"/>
</dbReference>
<dbReference type="Pfam" id="PF00160">
    <property type="entry name" value="Pro_isomerase"/>
    <property type="match status" value="1"/>
</dbReference>
<dbReference type="PIRSF" id="PIRSF001467">
    <property type="entry name" value="Peptidylpro_ismrse"/>
    <property type="match status" value="1"/>
</dbReference>
<dbReference type="PRINTS" id="PR00153">
    <property type="entry name" value="CSAPPISMRASE"/>
</dbReference>
<dbReference type="SUPFAM" id="SSF50891">
    <property type="entry name" value="Cyclophilin-like"/>
    <property type="match status" value="1"/>
</dbReference>
<dbReference type="PROSITE" id="PS00170">
    <property type="entry name" value="CSA_PPIASE_1"/>
    <property type="match status" value="1"/>
</dbReference>
<dbReference type="PROSITE" id="PS50072">
    <property type="entry name" value="CSA_PPIASE_2"/>
    <property type="match status" value="1"/>
</dbReference>
<name>PPIA_GORGO</name>
<protein>
    <recommendedName>
        <fullName>Peptidyl-prolyl cis-trans isomerase A</fullName>
        <shortName>PPIase A</shortName>
        <ecNumber evidence="2">5.2.1.8</ecNumber>
    </recommendedName>
    <alternativeName>
        <fullName>Cyclophilin A</fullName>
    </alternativeName>
    <alternativeName>
        <fullName>Cyclosporin A-binding protein</fullName>
    </alternativeName>
    <alternativeName>
        <fullName>Rotamase A</fullName>
    </alternativeName>
    <component>
        <recommendedName>
            <fullName>Peptidyl-prolyl cis-trans isomerase A, N-terminally processed</fullName>
        </recommendedName>
    </component>
</protein>
<organism>
    <name type="scientific">Gorilla gorilla gorilla</name>
    <name type="common">Western lowland gorilla</name>
    <dbReference type="NCBI Taxonomy" id="9595"/>
    <lineage>
        <taxon>Eukaryota</taxon>
        <taxon>Metazoa</taxon>
        <taxon>Chordata</taxon>
        <taxon>Craniata</taxon>
        <taxon>Vertebrata</taxon>
        <taxon>Euteleostomi</taxon>
        <taxon>Mammalia</taxon>
        <taxon>Eutheria</taxon>
        <taxon>Euarchontoglires</taxon>
        <taxon>Primates</taxon>
        <taxon>Haplorrhini</taxon>
        <taxon>Catarrhini</taxon>
        <taxon>Hominidae</taxon>
        <taxon>Gorilla</taxon>
    </lineage>
</organism>
<accession>Q0ZQL0</accession>
<evidence type="ECO:0000250" key="1">
    <source>
        <dbReference type="UniProtKB" id="P17742"/>
    </source>
</evidence>
<evidence type="ECO:0000250" key="2">
    <source>
        <dbReference type="UniProtKB" id="P62937"/>
    </source>
</evidence>
<evidence type="ECO:0000255" key="3"/>
<evidence type="ECO:0000255" key="4">
    <source>
        <dbReference type="PROSITE-ProRule" id="PRU00156"/>
    </source>
</evidence>
<evidence type="ECO:0000305" key="5"/>
<proteinExistence type="inferred from homology"/>
<reference key="1">
    <citation type="journal article" date="2006" name="Retrovirology">
        <title>Patterns of evolution of host proteins involved in retroviral pathogenesis.</title>
        <authorList>
            <person name="Ortiz M."/>
            <person name="Bleiber G."/>
            <person name="Martinez R."/>
            <person name="Kaessmann H."/>
            <person name="Telenti A."/>
        </authorList>
    </citation>
    <scope>NUCLEOTIDE SEQUENCE [GENOMIC DNA]</scope>
</reference>
<comment type="function">
    <text evidence="1 2">Catalyzes the cis-trans isomerization of proline imidic peptide bonds in oligopeptides (By similarity). Exerts a strong chemotactic effect on leukocytes partly through activation of one of its membrane receptors BSG/CD147, initiating a signaling cascade that culminates in MAPK/ERK activation (By similarity). Activates endothelial cells (ECs) in a proinflammatory manner by stimulating activation of NF-kappa-B and ERK, JNK and p38 MAP-kinases and by inducing expression of adhesion molecules including SELE and VCAM1 (By similarity). Induces apoptosis in ECs by promoting the FOXO1-dependent expression of CCL2 and BCL2L11 which are involved in EC chemotaxis and apoptosis (By similarity). In response to oxidative stress, initiates proapoptotic and antiapoptotic signaling in ECs via activation of NF-kappa-B and AKT1 and up-regulation of antiapoptotic protein BCL2 (By similarity). Negatively regulates MAP3K5/ASK1 kinase activity, autophosphorylation and oxidative stress-induced apoptosis mediated by MAP3K5/ASK1 (By similarity). Necessary for the assembly of TARDBP in heterogeneous nuclear ribonucleoprotein (hnRNP) complexes and regulates TARDBP binding to RNA UG repeats and TARDBP-dependent expression of HDAC6, ATG7 and VCP which are involved in clearance of protein aggregates (By similarity). Plays an important role in platelet activation and aggregation (By similarity). Regulates calcium mobilization and integrin ITGA2B:ITGB3 bidirectional signaling via increased ROS production as well as by facilitating the interaction between integrin and the cell cytoskeleton (By similarity). Binds heparan sulfate glycosaminoglycans (By similarity).</text>
</comment>
<comment type="catalytic activity">
    <reaction evidence="2">
        <text>[protein]-peptidylproline (omega=180) = [protein]-peptidylproline (omega=0)</text>
        <dbReference type="Rhea" id="RHEA:16237"/>
        <dbReference type="Rhea" id="RHEA-COMP:10747"/>
        <dbReference type="Rhea" id="RHEA-COMP:10748"/>
        <dbReference type="ChEBI" id="CHEBI:83833"/>
        <dbReference type="ChEBI" id="CHEBI:83834"/>
        <dbReference type="EC" id="5.2.1.8"/>
    </reaction>
</comment>
<comment type="activity regulation">
    <text evidence="2">Binds cyclosporin A (CsA). CsA mediates some of its effects via an inhibitory action on PPIase.</text>
</comment>
<comment type="subunit">
    <text evidence="1 2">Interacts with protein phosphatase PPP3CA/calcineurin A (By similarity). Interacts with isoform 2 of BSG/CD147 (By similarity). Interacts with FOXO1; the interaction promotes FOXO1 dephosphorylation, nuclear accumulation and transcriptional activity (By similarity). Interacts with integrin ITGA2B:ITGB3; the interaction is ROS and peptidyl-prolyl cis-trans isomerase (PPIase) activity-dependent and is increased in the presence of thrombin (By similarity). Interacts with MAP3K5 (By similarity). Interacts with TARDBP; the interaction is dependent on the RNA-binding activity of TARDBP and the PPIase activity of PPIA/CYPA and the acetylation of PPIA/CYPA at Lys-125 favors the interaction (By similarity). Interacts with HNRNPA1, HNRNPA2B1, HNRNPC, RBMX, HNRNPK and HNRNPM (By similarity).</text>
</comment>
<comment type="subcellular location">
    <subcellularLocation>
        <location evidence="2">Cytoplasm</location>
    </subcellularLocation>
    <subcellularLocation>
        <location evidence="2">Secreted</location>
    </subcellularLocation>
    <subcellularLocation>
        <location evidence="2">Nucleus</location>
    </subcellularLocation>
    <text evidence="2">Secretion occurs in response to oxidative stress in vascular smooth muscle through a vesicular secretory pathway that involves actin remodeling and myosin II activation, and mediates ERK1/2 activation.</text>
</comment>
<comment type="PTM">
    <text evidence="2">Acetylation at Lys-125 markedly inhibits catalysis of cis to trans isomerization (By similarity). PPIA acetylation also antagonizes the immunosuppressive effects of cyclosporine by inhibiting the sequential steps of cyclosporine binding and calcineurin inhibition (By similarity). Acetylation at Lys-125 favors the interaction with TARDBP (By similarity).</text>
</comment>
<comment type="similarity">
    <text evidence="5">Belongs to the cyclophilin-type PPIase family. PPIase A subfamily.</text>
</comment>
<gene>
    <name type="primary">PPIA</name>
</gene>
<feature type="chain" id="PRO_0000423239" description="Peptidyl-prolyl cis-trans isomerase A">
    <location>
        <begin position="1"/>
        <end position="165"/>
    </location>
</feature>
<feature type="initiator methionine" description="Removed; alternate" evidence="2">
    <location>
        <position position="1"/>
    </location>
</feature>
<feature type="chain" id="PRO_0000260459" description="Peptidyl-prolyl cis-trans isomerase A, N-terminally processed">
    <location>
        <begin position="2"/>
        <end position="165"/>
    </location>
</feature>
<feature type="domain" description="PPIase cyclophilin-type" evidence="4">
    <location>
        <begin position="7"/>
        <end position="163"/>
    </location>
</feature>
<feature type="modified residue" description="N-acetylmethionine" evidence="2">
    <location>
        <position position="1"/>
    </location>
</feature>
<feature type="modified residue" description="N-acetylvaline; in Peptidyl-prolyl cis-trans isomerase A, N-terminally processed" evidence="2">
    <location>
        <position position="2"/>
    </location>
</feature>
<feature type="modified residue" description="N6-acetyllysine; alternate" evidence="2">
    <location>
        <position position="28"/>
    </location>
</feature>
<feature type="modified residue" description="N6-acetyllysine" evidence="2">
    <location>
        <position position="44"/>
    </location>
</feature>
<feature type="modified residue" description="N6-acetyllysine" evidence="2">
    <location>
        <position position="76"/>
    </location>
</feature>
<feature type="modified residue" description="Phosphoserine" evidence="2">
    <location>
        <position position="77"/>
    </location>
</feature>
<feature type="modified residue" description="N6-acetyllysine; alternate" evidence="2">
    <location>
        <position position="82"/>
    </location>
</feature>
<feature type="modified residue" description="Phosphothreonine" evidence="2">
    <location>
        <position position="93"/>
    </location>
</feature>
<feature type="modified residue" description="N6-acetyllysine" evidence="2">
    <location>
        <position position="125"/>
    </location>
</feature>
<feature type="modified residue" description="N6-acetyllysine" evidence="2">
    <location>
        <position position="131"/>
    </location>
</feature>
<feature type="modified residue" description="N6-acetyllysine" evidence="1">
    <location>
        <position position="133"/>
    </location>
</feature>
<feature type="glycosylation site" description="N-linked (GlcNAc...) asparagine" evidence="3">
    <location>
        <position position="108"/>
    </location>
</feature>
<feature type="cross-link" description="Glycyl lysine isopeptide (Lys-Gly) (interchain with G-Cter in SUMO2); alternate" evidence="2">
    <location>
        <position position="28"/>
    </location>
</feature>
<feature type="cross-link" description="Glycyl lysine isopeptide (Lys-Gly) (interchain with G-Cter in ubiquitin); alternate" evidence="2">
    <location>
        <position position="28"/>
    </location>
</feature>
<feature type="cross-link" description="Glycyl lysine isopeptide (Lys-Gly) (interchain with G-Cter in SUMO2); alternate" evidence="2">
    <location>
        <position position="82"/>
    </location>
</feature>